<accession>A2S7R2</accession>
<comment type="function">
    <text evidence="1">Catalyzes a mechanistically unusual reaction, the ATP-dependent insertion of CO2 between the N7 and N8 nitrogen atoms of 7,8-diaminopelargonic acid (DAPA, also called 7,8-diammoniononanoate) to form a ureido ring.</text>
</comment>
<comment type="catalytic activity">
    <reaction evidence="1">
        <text>(7R,8S)-7,8-diammoniononanoate + CO2 + ATP = (4R,5S)-dethiobiotin + ADP + phosphate + 3 H(+)</text>
        <dbReference type="Rhea" id="RHEA:15805"/>
        <dbReference type="ChEBI" id="CHEBI:15378"/>
        <dbReference type="ChEBI" id="CHEBI:16526"/>
        <dbReference type="ChEBI" id="CHEBI:30616"/>
        <dbReference type="ChEBI" id="CHEBI:43474"/>
        <dbReference type="ChEBI" id="CHEBI:149469"/>
        <dbReference type="ChEBI" id="CHEBI:149473"/>
        <dbReference type="ChEBI" id="CHEBI:456216"/>
        <dbReference type="EC" id="6.3.3.3"/>
    </reaction>
</comment>
<comment type="cofactor">
    <cofactor evidence="1">
        <name>Mg(2+)</name>
        <dbReference type="ChEBI" id="CHEBI:18420"/>
    </cofactor>
</comment>
<comment type="pathway">
    <text evidence="1">Cofactor biosynthesis; biotin biosynthesis; biotin from 7,8-diaminononanoate: step 1/2.</text>
</comment>
<comment type="subunit">
    <text evidence="1">Homodimer.</text>
</comment>
<comment type="subcellular location">
    <subcellularLocation>
        <location evidence="1">Cytoplasm</location>
    </subcellularLocation>
</comment>
<comment type="similarity">
    <text evidence="1">Belongs to the dethiobiotin synthetase family.</text>
</comment>
<proteinExistence type="inferred from homology"/>
<organism>
    <name type="scientific">Burkholderia mallei (strain NCTC 10229)</name>
    <dbReference type="NCBI Taxonomy" id="412022"/>
    <lineage>
        <taxon>Bacteria</taxon>
        <taxon>Pseudomonadati</taxon>
        <taxon>Pseudomonadota</taxon>
        <taxon>Betaproteobacteria</taxon>
        <taxon>Burkholderiales</taxon>
        <taxon>Burkholderiaceae</taxon>
        <taxon>Burkholderia</taxon>
        <taxon>pseudomallei group</taxon>
    </lineage>
</organism>
<reference key="1">
    <citation type="journal article" date="2010" name="Genome Biol. Evol.">
        <title>Continuing evolution of Burkholderia mallei through genome reduction and large-scale rearrangements.</title>
        <authorList>
            <person name="Losada L."/>
            <person name="Ronning C.M."/>
            <person name="DeShazer D."/>
            <person name="Woods D."/>
            <person name="Fedorova N."/>
            <person name="Kim H.S."/>
            <person name="Shabalina S.A."/>
            <person name="Pearson T.R."/>
            <person name="Brinkac L."/>
            <person name="Tan P."/>
            <person name="Nandi T."/>
            <person name="Crabtree J."/>
            <person name="Badger J."/>
            <person name="Beckstrom-Sternberg S."/>
            <person name="Saqib M."/>
            <person name="Schutzer S.E."/>
            <person name="Keim P."/>
            <person name="Nierman W.C."/>
        </authorList>
    </citation>
    <scope>NUCLEOTIDE SEQUENCE [LARGE SCALE GENOMIC DNA]</scope>
    <source>
        <strain>NCTC 10229</strain>
    </source>
</reference>
<sequence>MSAPLSLFVTGTDTEIGKTFVSAALLHGFARAGLRAAAMKPVAAGAYERDGAWRNEDADQLDAAANVALPAAIRTPFLLKAPAAPHIVAAREGVALDIGTIVDAHRRACEMADVIVVEGVGGVRVPLADTRDTADLAVALGLPVVLVVGVRLGCISHALLTAEAIAARGLPLAGWVANRIDPAMPFADDNIDTLRAWLEREHRAPLLGALAHMSPPSPDAASHALDVNLLLNALRAAAPR</sequence>
<gene>
    <name evidence="1" type="primary">bioD</name>
    <name type="ordered locus">BMA10229_A2016</name>
</gene>
<name>BIOD_BURM9</name>
<keyword id="KW-0067">ATP-binding</keyword>
<keyword id="KW-0093">Biotin biosynthesis</keyword>
<keyword id="KW-0963">Cytoplasm</keyword>
<keyword id="KW-0436">Ligase</keyword>
<keyword id="KW-0460">Magnesium</keyword>
<keyword id="KW-0479">Metal-binding</keyword>
<keyword id="KW-0547">Nucleotide-binding</keyword>
<evidence type="ECO:0000255" key="1">
    <source>
        <dbReference type="HAMAP-Rule" id="MF_00336"/>
    </source>
</evidence>
<protein>
    <recommendedName>
        <fullName evidence="1">ATP-dependent dethiobiotin synthetase BioD</fullName>
        <ecNumber evidence="1">6.3.3.3</ecNumber>
    </recommendedName>
    <alternativeName>
        <fullName evidence="1">DTB synthetase</fullName>
        <shortName evidence="1">DTBS</shortName>
    </alternativeName>
    <alternativeName>
        <fullName evidence="1">Dethiobiotin synthase</fullName>
    </alternativeName>
</protein>
<dbReference type="EC" id="6.3.3.3" evidence="1"/>
<dbReference type="EMBL" id="CP000546">
    <property type="protein sequence ID" value="ABN03855.1"/>
    <property type="molecule type" value="Genomic_DNA"/>
</dbReference>
<dbReference type="RefSeq" id="WP_004189380.1">
    <property type="nucleotide sequence ID" value="NC_008836.1"/>
</dbReference>
<dbReference type="SMR" id="A2S7R2"/>
<dbReference type="GeneID" id="92977885"/>
<dbReference type="KEGG" id="bml:BMA10229_A2016"/>
<dbReference type="HOGENOM" id="CLU_072551_0_0_4"/>
<dbReference type="UniPathway" id="UPA00078">
    <property type="reaction ID" value="UER00161"/>
</dbReference>
<dbReference type="Proteomes" id="UP000002283">
    <property type="component" value="Chromosome I"/>
</dbReference>
<dbReference type="GO" id="GO:0005829">
    <property type="term" value="C:cytosol"/>
    <property type="evidence" value="ECO:0007669"/>
    <property type="project" value="TreeGrafter"/>
</dbReference>
<dbReference type="GO" id="GO:0005524">
    <property type="term" value="F:ATP binding"/>
    <property type="evidence" value="ECO:0007669"/>
    <property type="project" value="UniProtKB-UniRule"/>
</dbReference>
<dbReference type="GO" id="GO:0004141">
    <property type="term" value="F:dethiobiotin synthase activity"/>
    <property type="evidence" value="ECO:0007669"/>
    <property type="project" value="UniProtKB-UniRule"/>
</dbReference>
<dbReference type="GO" id="GO:0000287">
    <property type="term" value="F:magnesium ion binding"/>
    <property type="evidence" value="ECO:0007669"/>
    <property type="project" value="UniProtKB-UniRule"/>
</dbReference>
<dbReference type="GO" id="GO:0009102">
    <property type="term" value="P:biotin biosynthetic process"/>
    <property type="evidence" value="ECO:0007669"/>
    <property type="project" value="UniProtKB-UniRule"/>
</dbReference>
<dbReference type="CDD" id="cd03109">
    <property type="entry name" value="DTBS"/>
    <property type="match status" value="1"/>
</dbReference>
<dbReference type="FunFam" id="3.40.50.300:FF:000292">
    <property type="entry name" value="ATP-dependent dethiobiotin synthetase BioD"/>
    <property type="match status" value="1"/>
</dbReference>
<dbReference type="Gene3D" id="3.40.50.300">
    <property type="entry name" value="P-loop containing nucleotide triphosphate hydrolases"/>
    <property type="match status" value="1"/>
</dbReference>
<dbReference type="HAMAP" id="MF_00336">
    <property type="entry name" value="BioD"/>
    <property type="match status" value="1"/>
</dbReference>
<dbReference type="InterPro" id="IPR004472">
    <property type="entry name" value="DTB_synth_BioD"/>
</dbReference>
<dbReference type="InterPro" id="IPR027417">
    <property type="entry name" value="P-loop_NTPase"/>
</dbReference>
<dbReference type="NCBIfam" id="TIGR00347">
    <property type="entry name" value="bioD"/>
    <property type="match status" value="1"/>
</dbReference>
<dbReference type="PANTHER" id="PTHR43210">
    <property type="entry name" value="DETHIOBIOTIN SYNTHETASE"/>
    <property type="match status" value="1"/>
</dbReference>
<dbReference type="PANTHER" id="PTHR43210:SF5">
    <property type="entry name" value="DETHIOBIOTIN SYNTHETASE"/>
    <property type="match status" value="1"/>
</dbReference>
<dbReference type="Pfam" id="PF13500">
    <property type="entry name" value="AAA_26"/>
    <property type="match status" value="1"/>
</dbReference>
<dbReference type="PIRSF" id="PIRSF006755">
    <property type="entry name" value="DTB_synth"/>
    <property type="match status" value="1"/>
</dbReference>
<dbReference type="SUPFAM" id="SSF52540">
    <property type="entry name" value="P-loop containing nucleoside triphosphate hydrolases"/>
    <property type="match status" value="1"/>
</dbReference>
<feature type="chain" id="PRO_1000019551" description="ATP-dependent dethiobiotin synthetase BioD">
    <location>
        <begin position="1"/>
        <end position="240"/>
    </location>
</feature>
<feature type="active site" evidence="1">
    <location>
        <position position="40"/>
    </location>
</feature>
<feature type="binding site" evidence="1">
    <location>
        <begin position="15"/>
        <end position="20"/>
    </location>
    <ligand>
        <name>ATP</name>
        <dbReference type="ChEBI" id="CHEBI:30616"/>
    </ligand>
</feature>
<feature type="binding site" evidence="1">
    <location>
        <position position="19"/>
    </location>
    <ligand>
        <name>Mg(2+)</name>
        <dbReference type="ChEBI" id="CHEBI:18420"/>
    </ligand>
</feature>
<feature type="binding site" evidence="1">
    <location>
        <position position="57"/>
    </location>
    <ligand>
        <name>ATP</name>
        <dbReference type="ChEBI" id="CHEBI:30616"/>
    </ligand>
</feature>
<feature type="binding site" evidence="1">
    <location>
        <position position="57"/>
    </location>
    <ligand>
        <name>Mg(2+)</name>
        <dbReference type="ChEBI" id="CHEBI:18420"/>
    </ligand>
</feature>
<feature type="binding site" evidence="1">
    <location>
        <begin position="118"/>
        <end position="121"/>
    </location>
    <ligand>
        <name>ATP</name>
        <dbReference type="ChEBI" id="CHEBI:30616"/>
    </ligand>
</feature>
<feature type="binding site" evidence="1">
    <location>
        <position position="118"/>
    </location>
    <ligand>
        <name>Mg(2+)</name>
        <dbReference type="ChEBI" id="CHEBI:18420"/>
    </ligand>
</feature>
<feature type="binding site" evidence="1">
    <location>
        <begin position="178"/>
        <end position="179"/>
    </location>
    <ligand>
        <name>ATP</name>
        <dbReference type="ChEBI" id="CHEBI:30616"/>
    </ligand>
</feature>